<keyword id="KW-0067">ATP-binding</keyword>
<keyword id="KW-0963">Cytoplasm</keyword>
<keyword id="KW-0275">Fatty acid biosynthesis</keyword>
<keyword id="KW-0276">Fatty acid metabolism</keyword>
<keyword id="KW-0444">Lipid biosynthesis</keyword>
<keyword id="KW-0443">Lipid metabolism</keyword>
<keyword id="KW-0479">Metal-binding</keyword>
<keyword id="KW-0547">Nucleotide-binding</keyword>
<keyword id="KW-1185">Reference proteome</keyword>
<keyword id="KW-0808">Transferase</keyword>
<keyword id="KW-0862">Zinc</keyword>
<keyword id="KW-0863">Zinc-finger</keyword>
<name>ACCD_HAEIN</name>
<sequence>MSWINRIFSKSPSSSTRKANVPEGVWTKCTACEQVLYSEELKRNLYVCPKCGHHMRIDARERLLNLLDEDSSQEIAADLEPKDILKFKDLKKYKDRINAAQKETGEKDALITMTGTLYNMPIVVAASNFAFMGGSMGSVVGAKFVKAAEKAMEMNCPFVCFSASGGARMQEALFSLMQMAKTSAVLAQMREKGVPFISVLTDPTLGGVSASFAMLGDLNIAEPKALIGFAGPRVIEQTVREKLPEGFQRSEFLLEKGAIDMIVKRSEMRQTLASVLSKLTNQPSPFVEPELISEDE</sequence>
<reference key="1">
    <citation type="journal article" date="1995" name="Science">
        <title>Whole-genome random sequencing and assembly of Haemophilus influenzae Rd.</title>
        <authorList>
            <person name="Fleischmann R.D."/>
            <person name="Adams M.D."/>
            <person name="White O."/>
            <person name="Clayton R.A."/>
            <person name="Kirkness E.F."/>
            <person name="Kerlavage A.R."/>
            <person name="Bult C.J."/>
            <person name="Tomb J.-F."/>
            <person name="Dougherty B.A."/>
            <person name="Merrick J.M."/>
            <person name="McKenney K."/>
            <person name="Sutton G.G."/>
            <person name="FitzHugh W."/>
            <person name="Fields C.A."/>
            <person name="Gocayne J.D."/>
            <person name="Scott J.D."/>
            <person name="Shirley R."/>
            <person name="Liu L.-I."/>
            <person name="Glodek A."/>
            <person name="Kelley J.M."/>
            <person name="Weidman J.F."/>
            <person name="Phillips C.A."/>
            <person name="Spriggs T."/>
            <person name="Hedblom E."/>
            <person name="Cotton M.D."/>
            <person name="Utterback T.R."/>
            <person name="Hanna M.C."/>
            <person name="Nguyen D.T."/>
            <person name="Saudek D.M."/>
            <person name="Brandon R.C."/>
            <person name="Fine L.D."/>
            <person name="Fritchman J.L."/>
            <person name="Fuhrmann J.L."/>
            <person name="Geoghagen N.S.M."/>
            <person name="Gnehm C.L."/>
            <person name="McDonald L.A."/>
            <person name="Small K.V."/>
            <person name="Fraser C.M."/>
            <person name="Smith H.O."/>
            <person name="Venter J.C."/>
        </authorList>
    </citation>
    <scope>NUCLEOTIDE SEQUENCE [LARGE SCALE GENOMIC DNA]</scope>
    <source>
        <strain>ATCC 51907 / DSM 11121 / KW20 / Rd</strain>
    </source>
</reference>
<protein>
    <recommendedName>
        <fullName evidence="1">Acetyl-coenzyme A carboxylase carboxyl transferase subunit beta</fullName>
        <shortName evidence="1">ACCase subunit beta</shortName>
        <shortName evidence="1">Acetyl-CoA carboxylase carboxyltransferase subunit beta</shortName>
        <ecNumber evidence="1">2.1.3.15</ecNumber>
    </recommendedName>
</protein>
<feature type="chain" id="PRO_0000199772" description="Acetyl-coenzyme A carboxylase carboxyl transferase subunit beta">
    <location>
        <begin position="1"/>
        <end position="296"/>
    </location>
</feature>
<feature type="domain" description="CoA carboxyltransferase N-terminal" evidence="2">
    <location>
        <begin position="25"/>
        <end position="294"/>
    </location>
</feature>
<feature type="zinc finger region" description="C4-type" evidence="1">
    <location>
        <begin position="29"/>
        <end position="51"/>
    </location>
</feature>
<feature type="binding site" evidence="1">
    <location>
        <position position="29"/>
    </location>
    <ligand>
        <name>Zn(2+)</name>
        <dbReference type="ChEBI" id="CHEBI:29105"/>
    </ligand>
</feature>
<feature type="binding site" evidence="1">
    <location>
        <position position="32"/>
    </location>
    <ligand>
        <name>Zn(2+)</name>
        <dbReference type="ChEBI" id="CHEBI:29105"/>
    </ligand>
</feature>
<feature type="binding site" evidence="1">
    <location>
        <position position="48"/>
    </location>
    <ligand>
        <name>Zn(2+)</name>
        <dbReference type="ChEBI" id="CHEBI:29105"/>
    </ligand>
</feature>
<feature type="binding site" evidence="1">
    <location>
        <position position="51"/>
    </location>
    <ligand>
        <name>Zn(2+)</name>
        <dbReference type="ChEBI" id="CHEBI:29105"/>
    </ligand>
</feature>
<dbReference type="EC" id="2.1.3.15" evidence="1"/>
<dbReference type="EMBL" id="L42023">
    <property type="protein sequence ID" value="AAC22913.1"/>
    <property type="molecule type" value="Genomic_DNA"/>
</dbReference>
<dbReference type="PIR" id="B64113">
    <property type="entry name" value="B64113"/>
</dbReference>
<dbReference type="RefSeq" id="NP_439415.1">
    <property type="nucleotide sequence ID" value="NC_000907.1"/>
</dbReference>
<dbReference type="SMR" id="P43778"/>
<dbReference type="STRING" id="71421.HI_1260"/>
<dbReference type="EnsemblBacteria" id="AAC22913">
    <property type="protein sequence ID" value="AAC22913"/>
    <property type="gene ID" value="HI_1260"/>
</dbReference>
<dbReference type="KEGG" id="hin:HI_1260"/>
<dbReference type="PATRIC" id="fig|71421.8.peg.1312"/>
<dbReference type="eggNOG" id="COG0777">
    <property type="taxonomic scope" value="Bacteria"/>
</dbReference>
<dbReference type="HOGENOM" id="CLU_015486_1_0_6"/>
<dbReference type="OrthoDB" id="9772975at2"/>
<dbReference type="PhylomeDB" id="P43778"/>
<dbReference type="BioCyc" id="HINF71421:G1GJ1-1288-MONOMER"/>
<dbReference type="UniPathway" id="UPA00655">
    <property type="reaction ID" value="UER00711"/>
</dbReference>
<dbReference type="Proteomes" id="UP000000579">
    <property type="component" value="Chromosome"/>
</dbReference>
<dbReference type="GO" id="GO:0009329">
    <property type="term" value="C:acetate CoA-transferase complex"/>
    <property type="evidence" value="ECO:0000318"/>
    <property type="project" value="GO_Central"/>
</dbReference>
<dbReference type="GO" id="GO:0003989">
    <property type="term" value="F:acetyl-CoA carboxylase activity"/>
    <property type="evidence" value="ECO:0007669"/>
    <property type="project" value="InterPro"/>
</dbReference>
<dbReference type="GO" id="GO:0005524">
    <property type="term" value="F:ATP binding"/>
    <property type="evidence" value="ECO:0007669"/>
    <property type="project" value="UniProtKB-KW"/>
</dbReference>
<dbReference type="GO" id="GO:0016743">
    <property type="term" value="F:carboxyl- or carbamoyltransferase activity"/>
    <property type="evidence" value="ECO:0007669"/>
    <property type="project" value="UniProtKB-UniRule"/>
</dbReference>
<dbReference type="GO" id="GO:0008270">
    <property type="term" value="F:zinc ion binding"/>
    <property type="evidence" value="ECO:0007669"/>
    <property type="project" value="UniProtKB-UniRule"/>
</dbReference>
<dbReference type="GO" id="GO:0006633">
    <property type="term" value="P:fatty acid biosynthetic process"/>
    <property type="evidence" value="ECO:0000318"/>
    <property type="project" value="GO_Central"/>
</dbReference>
<dbReference type="GO" id="GO:2001295">
    <property type="term" value="P:malonyl-CoA biosynthetic process"/>
    <property type="evidence" value="ECO:0000318"/>
    <property type="project" value="GO_Central"/>
</dbReference>
<dbReference type="GO" id="GO:0017148">
    <property type="term" value="P:negative regulation of translation"/>
    <property type="evidence" value="ECO:0000318"/>
    <property type="project" value="GO_Central"/>
</dbReference>
<dbReference type="Gene3D" id="3.90.226.10">
    <property type="entry name" value="2-enoyl-CoA Hydratase, Chain A, domain 1"/>
    <property type="match status" value="1"/>
</dbReference>
<dbReference type="HAMAP" id="MF_01395">
    <property type="entry name" value="AcetylCoA_CT_beta"/>
    <property type="match status" value="1"/>
</dbReference>
<dbReference type="InterPro" id="IPR034733">
    <property type="entry name" value="AcCoA_carboxyl_beta"/>
</dbReference>
<dbReference type="InterPro" id="IPR000438">
    <property type="entry name" value="Acetyl_CoA_COase_Trfase_b_su"/>
</dbReference>
<dbReference type="InterPro" id="IPR029045">
    <property type="entry name" value="ClpP/crotonase-like_dom_sf"/>
</dbReference>
<dbReference type="InterPro" id="IPR011762">
    <property type="entry name" value="COA_CT_N"/>
</dbReference>
<dbReference type="InterPro" id="IPR041010">
    <property type="entry name" value="Znf-ACC"/>
</dbReference>
<dbReference type="NCBIfam" id="TIGR00515">
    <property type="entry name" value="accD"/>
    <property type="match status" value="1"/>
</dbReference>
<dbReference type="PANTHER" id="PTHR42995">
    <property type="entry name" value="ACETYL-COENZYME A CARBOXYLASE CARBOXYL TRANSFERASE SUBUNIT BETA, CHLOROPLASTIC"/>
    <property type="match status" value="1"/>
</dbReference>
<dbReference type="PANTHER" id="PTHR42995:SF5">
    <property type="entry name" value="ACETYL-COENZYME A CARBOXYLASE CARBOXYL TRANSFERASE SUBUNIT BETA, CHLOROPLASTIC"/>
    <property type="match status" value="1"/>
</dbReference>
<dbReference type="Pfam" id="PF01039">
    <property type="entry name" value="Carboxyl_trans"/>
    <property type="match status" value="1"/>
</dbReference>
<dbReference type="Pfam" id="PF17848">
    <property type="entry name" value="Zn_ribbon_ACC"/>
    <property type="match status" value="1"/>
</dbReference>
<dbReference type="PRINTS" id="PR01070">
    <property type="entry name" value="ACCCTRFRASEB"/>
</dbReference>
<dbReference type="SUPFAM" id="SSF52096">
    <property type="entry name" value="ClpP/crotonase"/>
    <property type="match status" value="1"/>
</dbReference>
<dbReference type="PROSITE" id="PS50980">
    <property type="entry name" value="COA_CT_NTER"/>
    <property type="match status" value="1"/>
</dbReference>
<comment type="function">
    <text evidence="1">Component of the acetyl coenzyme A carboxylase (ACC) complex. Biotin carboxylase (BC) catalyzes the carboxylation of biotin on its carrier protein (BCCP) and then the CO(2) group is transferred by the transcarboxylase to acetyl-CoA to form malonyl-CoA.</text>
</comment>
<comment type="catalytic activity">
    <reaction evidence="1">
        <text>N(6)-carboxybiotinyl-L-lysyl-[protein] + acetyl-CoA = N(6)-biotinyl-L-lysyl-[protein] + malonyl-CoA</text>
        <dbReference type="Rhea" id="RHEA:54728"/>
        <dbReference type="Rhea" id="RHEA-COMP:10505"/>
        <dbReference type="Rhea" id="RHEA-COMP:10506"/>
        <dbReference type="ChEBI" id="CHEBI:57288"/>
        <dbReference type="ChEBI" id="CHEBI:57384"/>
        <dbReference type="ChEBI" id="CHEBI:83144"/>
        <dbReference type="ChEBI" id="CHEBI:83145"/>
        <dbReference type="EC" id="2.1.3.15"/>
    </reaction>
</comment>
<comment type="cofactor">
    <cofactor evidence="1">
        <name>Zn(2+)</name>
        <dbReference type="ChEBI" id="CHEBI:29105"/>
    </cofactor>
    <text evidence="1">Binds 1 zinc ion per subunit.</text>
</comment>
<comment type="pathway">
    <text evidence="1">Lipid metabolism; malonyl-CoA biosynthesis; malonyl-CoA from acetyl-CoA: step 1/1.</text>
</comment>
<comment type="subunit">
    <text evidence="1">Acetyl-CoA carboxylase is a heterohexamer composed of biotin carboxyl carrier protein (AccB), biotin carboxylase (AccC) and two subunits each of ACCase subunit alpha (AccA) and ACCase subunit beta (AccD).</text>
</comment>
<comment type="subcellular location">
    <subcellularLocation>
        <location evidence="1">Cytoplasm</location>
    </subcellularLocation>
</comment>
<comment type="similarity">
    <text evidence="1">Belongs to the AccD/PCCB family.</text>
</comment>
<organism>
    <name type="scientific">Haemophilus influenzae (strain ATCC 51907 / DSM 11121 / KW20 / Rd)</name>
    <dbReference type="NCBI Taxonomy" id="71421"/>
    <lineage>
        <taxon>Bacteria</taxon>
        <taxon>Pseudomonadati</taxon>
        <taxon>Pseudomonadota</taxon>
        <taxon>Gammaproteobacteria</taxon>
        <taxon>Pasteurellales</taxon>
        <taxon>Pasteurellaceae</taxon>
        <taxon>Haemophilus</taxon>
    </lineage>
</organism>
<accession>P43778</accession>
<proteinExistence type="inferred from homology"/>
<evidence type="ECO:0000255" key="1">
    <source>
        <dbReference type="HAMAP-Rule" id="MF_01395"/>
    </source>
</evidence>
<evidence type="ECO:0000255" key="2">
    <source>
        <dbReference type="PROSITE-ProRule" id="PRU01136"/>
    </source>
</evidence>
<gene>
    <name evidence="1" type="primary">accD</name>
    <name type="ordered locus">HI_1260</name>
</gene>